<sequence length="336" mass="37150">MGGTKLTHVTTTNPNNSNIHGPVVDEVEGLIKVYKDGHVERSQLLPCVDPSLPLELGVTCSDVVIDKLTNVWARLYVPMTTTKSSVSKLPLIVYFHGGGFCVGSASWLCYHEFLARLSARSRCLVMSVNYRLAPENPLPAAYEDGVNAILWLNKARNDNLWAKQCDFGRIFLAGDSAGGNIAQQVAARLASPEDLALKIEGTILIQPFYSGEERTESERRVGNDKTAVLTLASSDAWWRMSLPRGANREHPYCKPVKMIIKSSTVTRTLVCVAEMDLLMDSNMEMCDGNEDVIKRVLHKGVGHAFHILGKSQLAHTTTLEMLCQIDAFIHHYDPLN</sequence>
<protein>
    <recommendedName>
        <fullName>Probable carboxylesterase 6</fullName>
    </recommendedName>
    <alternativeName>
        <fullName>AtCXE6</fullName>
        <ecNumber>3.1.1.1</ecNumber>
    </alternativeName>
</protein>
<feature type="chain" id="PRO_0000402552" description="Probable carboxylesterase 6">
    <location>
        <begin position="1"/>
        <end position="336"/>
    </location>
</feature>
<feature type="region of interest" description="Disordered" evidence="4">
    <location>
        <begin position="1"/>
        <end position="20"/>
    </location>
</feature>
<feature type="short sequence motif" description="Involved in the stabilization of the negatively charged intermediate by the formation of the oxyanion hole" evidence="2">
    <location>
        <begin position="96"/>
        <end position="98"/>
    </location>
</feature>
<feature type="compositionally biased region" description="Polar residues" evidence="4">
    <location>
        <begin position="7"/>
        <end position="19"/>
    </location>
</feature>
<feature type="active site" evidence="3">
    <location>
        <position position="176"/>
    </location>
</feature>
<feature type="active site" evidence="3">
    <location>
        <position position="276"/>
    </location>
</feature>
<feature type="active site" evidence="3">
    <location>
        <position position="303"/>
    </location>
</feature>
<reference key="1">
    <citation type="journal article" date="2000" name="Nature">
        <title>Sequence and analysis of chromosome 1 of the plant Arabidopsis thaliana.</title>
        <authorList>
            <person name="Theologis A."/>
            <person name="Ecker J.R."/>
            <person name="Palm C.J."/>
            <person name="Federspiel N.A."/>
            <person name="Kaul S."/>
            <person name="White O."/>
            <person name="Alonso J."/>
            <person name="Altafi H."/>
            <person name="Araujo R."/>
            <person name="Bowman C.L."/>
            <person name="Brooks S.Y."/>
            <person name="Buehler E."/>
            <person name="Chan A."/>
            <person name="Chao Q."/>
            <person name="Chen H."/>
            <person name="Cheuk R.F."/>
            <person name="Chin C.W."/>
            <person name="Chung M.K."/>
            <person name="Conn L."/>
            <person name="Conway A.B."/>
            <person name="Conway A.R."/>
            <person name="Creasy T.H."/>
            <person name="Dewar K."/>
            <person name="Dunn P."/>
            <person name="Etgu P."/>
            <person name="Feldblyum T.V."/>
            <person name="Feng J.-D."/>
            <person name="Fong B."/>
            <person name="Fujii C.Y."/>
            <person name="Gill J.E."/>
            <person name="Goldsmith A.D."/>
            <person name="Haas B."/>
            <person name="Hansen N.F."/>
            <person name="Hughes B."/>
            <person name="Huizar L."/>
            <person name="Hunter J.L."/>
            <person name="Jenkins J."/>
            <person name="Johnson-Hopson C."/>
            <person name="Khan S."/>
            <person name="Khaykin E."/>
            <person name="Kim C.J."/>
            <person name="Koo H.L."/>
            <person name="Kremenetskaia I."/>
            <person name="Kurtz D.B."/>
            <person name="Kwan A."/>
            <person name="Lam B."/>
            <person name="Langin-Hooper S."/>
            <person name="Lee A."/>
            <person name="Lee J.M."/>
            <person name="Lenz C.A."/>
            <person name="Li J.H."/>
            <person name="Li Y.-P."/>
            <person name="Lin X."/>
            <person name="Liu S.X."/>
            <person name="Liu Z.A."/>
            <person name="Luros J.S."/>
            <person name="Maiti R."/>
            <person name="Marziali A."/>
            <person name="Militscher J."/>
            <person name="Miranda M."/>
            <person name="Nguyen M."/>
            <person name="Nierman W.C."/>
            <person name="Osborne B.I."/>
            <person name="Pai G."/>
            <person name="Peterson J."/>
            <person name="Pham P.K."/>
            <person name="Rizzo M."/>
            <person name="Rooney T."/>
            <person name="Rowley D."/>
            <person name="Sakano H."/>
            <person name="Salzberg S.L."/>
            <person name="Schwartz J.R."/>
            <person name="Shinn P."/>
            <person name="Southwick A.M."/>
            <person name="Sun H."/>
            <person name="Tallon L.J."/>
            <person name="Tambunga G."/>
            <person name="Toriumi M.J."/>
            <person name="Town C.D."/>
            <person name="Utterback T."/>
            <person name="Van Aken S."/>
            <person name="Vaysberg M."/>
            <person name="Vysotskaia V.S."/>
            <person name="Walker M."/>
            <person name="Wu D."/>
            <person name="Yu G."/>
            <person name="Fraser C.M."/>
            <person name="Venter J.C."/>
            <person name="Davis R.W."/>
        </authorList>
    </citation>
    <scope>NUCLEOTIDE SEQUENCE [LARGE SCALE GENOMIC DNA]</scope>
    <source>
        <strain>cv. Columbia</strain>
    </source>
</reference>
<reference key="2">
    <citation type="journal article" date="2017" name="Plant J.">
        <title>Araport11: a complete reannotation of the Arabidopsis thaliana reference genome.</title>
        <authorList>
            <person name="Cheng C.Y."/>
            <person name="Krishnakumar V."/>
            <person name="Chan A.P."/>
            <person name="Thibaud-Nissen F."/>
            <person name="Schobel S."/>
            <person name="Town C.D."/>
        </authorList>
    </citation>
    <scope>GENOME REANNOTATION</scope>
    <source>
        <strain>cv. Columbia</strain>
    </source>
</reference>
<reference key="3">
    <citation type="journal article" date="2003" name="Science">
        <title>Empirical analysis of transcriptional activity in the Arabidopsis genome.</title>
        <authorList>
            <person name="Yamada K."/>
            <person name="Lim J."/>
            <person name="Dale J.M."/>
            <person name="Chen H."/>
            <person name="Shinn P."/>
            <person name="Palm C.J."/>
            <person name="Southwick A.M."/>
            <person name="Wu H.C."/>
            <person name="Kim C.J."/>
            <person name="Nguyen M."/>
            <person name="Pham P.K."/>
            <person name="Cheuk R.F."/>
            <person name="Karlin-Newmann G."/>
            <person name="Liu S.X."/>
            <person name="Lam B."/>
            <person name="Sakano H."/>
            <person name="Wu T."/>
            <person name="Yu G."/>
            <person name="Miranda M."/>
            <person name="Quach H.L."/>
            <person name="Tripp M."/>
            <person name="Chang C.H."/>
            <person name="Lee J.M."/>
            <person name="Toriumi M.J."/>
            <person name="Chan M.M."/>
            <person name="Tang C.C."/>
            <person name="Onodera C.S."/>
            <person name="Deng J.M."/>
            <person name="Akiyama K."/>
            <person name="Ansari Y."/>
            <person name="Arakawa T."/>
            <person name="Banh J."/>
            <person name="Banno F."/>
            <person name="Bowser L."/>
            <person name="Brooks S.Y."/>
            <person name="Carninci P."/>
            <person name="Chao Q."/>
            <person name="Choy N."/>
            <person name="Enju A."/>
            <person name="Goldsmith A.D."/>
            <person name="Gurjal M."/>
            <person name="Hansen N.F."/>
            <person name="Hayashizaki Y."/>
            <person name="Johnson-Hopson C."/>
            <person name="Hsuan V.W."/>
            <person name="Iida K."/>
            <person name="Karnes M."/>
            <person name="Khan S."/>
            <person name="Koesema E."/>
            <person name="Ishida J."/>
            <person name="Jiang P.X."/>
            <person name="Jones T."/>
            <person name="Kawai J."/>
            <person name="Kamiya A."/>
            <person name="Meyers C."/>
            <person name="Nakajima M."/>
            <person name="Narusaka M."/>
            <person name="Seki M."/>
            <person name="Sakurai T."/>
            <person name="Satou M."/>
            <person name="Tamse R."/>
            <person name="Vaysberg M."/>
            <person name="Wallender E.K."/>
            <person name="Wong C."/>
            <person name="Yamamura Y."/>
            <person name="Yuan S."/>
            <person name="Shinozaki K."/>
            <person name="Davis R.W."/>
            <person name="Theologis A."/>
            <person name="Ecker J.R."/>
        </authorList>
    </citation>
    <scope>NUCLEOTIDE SEQUENCE [LARGE SCALE MRNA]</scope>
    <source>
        <strain>cv. Columbia</strain>
    </source>
</reference>
<reference key="4">
    <citation type="journal article" date="2003" name="J. Mol. Evol.">
        <title>The carboxylesterase gene family from Arabidopsis thaliana.</title>
        <authorList>
            <person name="Marshall S.D."/>
            <person name="Putterill J.J."/>
            <person name="Plummer K.M."/>
            <person name="Newcomb R.D."/>
        </authorList>
    </citation>
    <scope>TISSUE SPECIFICITY</scope>
    <scope>GENE FAMILY</scope>
    <scope>NOMENCLATURE</scope>
</reference>
<comment type="function">
    <text evidence="1">Carboxylesterase acting on esters with varying acyl chain length.</text>
</comment>
<comment type="catalytic activity">
    <reaction>
        <text>a carboxylic ester + H2O = an alcohol + a carboxylate + H(+)</text>
        <dbReference type="Rhea" id="RHEA:21164"/>
        <dbReference type="ChEBI" id="CHEBI:15377"/>
        <dbReference type="ChEBI" id="CHEBI:15378"/>
        <dbReference type="ChEBI" id="CHEBI:29067"/>
        <dbReference type="ChEBI" id="CHEBI:30879"/>
        <dbReference type="ChEBI" id="CHEBI:33308"/>
        <dbReference type="EC" id="3.1.1.1"/>
    </reaction>
</comment>
<comment type="tissue specificity">
    <text evidence="5">Expressed in roots, leaves, flowers and siliques.</text>
</comment>
<comment type="similarity">
    <text evidence="6">Belongs to the 'GDXG' lipolytic enzyme family.</text>
</comment>
<name>CXE6_ARATH</name>
<accession>Q9SX25</accession>
<keyword id="KW-0378">Hydrolase</keyword>
<keyword id="KW-1185">Reference proteome</keyword>
<keyword id="KW-0719">Serine esterase</keyword>
<proteinExistence type="evidence at transcript level"/>
<gene>
    <name type="primary">CXE6</name>
    <name type="ordered locus">At1g68620</name>
    <name type="ORF">F24J5.14</name>
</gene>
<evidence type="ECO:0000250" key="1"/>
<evidence type="ECO:0000250" key="2">
    <source>
        <dbReference type="UniProtKB" id="Q5NUF3"/>
    </source>
</evidence>
<evidence type="ECO:0000255" key="3">
    <source>
        <dbReference type="PROSITE-ProRule" id="PRU10038"/>
    </source>
</evidence>
<evidence type="ECO:0000256" key="4">
    <source>
        <dbReference type="SAM" id="MobiDB-lite"/>
    </source>
</evidence>
<evidence type="ECO:0000269" key="5">
    <source>
    </source>
</evidence>
<evidence type="ECO:0000305" key="6"/>
<organism>
    <name type="scientific">Arabidopsis thaliana</name>
    <name type="common">Mouse-ear cress</name>
    <dbReference type="NCBI Taxonomy" id="3702"/>
    <lineage>
        <taxon>Eukaryota</taxon>
        <taxon>Viridiplantae</taxon>
        <taxon>Streptophyta</taxon>
        <taxon>Embryophyta</taxon>
        <taxon>Tracheophyta</taxon>
        <taxon>Spermatophyta</taxon>
        <taxon>Magnoliopsida</taxon>
        <taxon>eudicotyledons</taxon>
        <taxon>Gunneridae</taxon>
        <taxon>Pentapetalae</taxon>
        <taxon>rosids</taxon>
        <taxon>malvids</taxon>
        <taxon>Brassicales</taxon>
        <taxon>Brassicaceae</taxon>
        <taxon>Camelineae</taxon>
        <taxon>Arabidopsis</taxon>
    </lineage>
</organism>
<dbReference type="EC" id="3.1.1.1"/>
<dbReference type="EMBL" id="AC008075">
    <property type="protein sequence ID" value="AAD49980.1"/>
    <property type="molecule type" value="Genomic_DNA"/>
</dbReference>
<dbReference type="EMBL" id="CP002684">
    <property type="protein sequence ID" value="AEE34820.1"/>
    <property type="molecule type" value="Genomic_DNA"/>
</dbReference>
<dbReference type="EMBL" id="AF370151">
    <property type="protein sequence ID" value="AAK43966.1"/>
    <property type="molecule type" value="mRNA"/>
</dbReference>
<dbReference type="EMBL" id="AY037242">
    <property type="protein sequence ID" value="AAK59842.1"/>
    <property type="molecule type" value="mRNA"/>
</dbReference>
<dbReference type="EMBL" id="AY059093">
    <property type="protein sequence ID" value="AAL15199.1"/>
    <property type="molecule type" value="mRNA"/>
</dbReference>
<dbReference type="PIR" id="F96710">
    <property type="entry name" value="F96710"/>
</dbReference>
<dbReference type="RefSeq" id="NP_564936.1">
    <property type="nucleotide sequence ID" value="NM_105534.4"/>
</dbReference>
<dbReference type="SMR" id="Q9SX25"/>
<dbReference type="FunCoup" id="Q9SX25">
    <property type="interactions" value="44"/>
</dbReference>
<dbReference type="STRING" id="3702.Q9SX25"/>
<dbReference type="ESTHER" id="arath-CXE6">
    <property type="family name" value="Plant_carboxylesterase"/>
</dbReference>
<dbReference type="MEROPS" id="S09.A15"/>
<dbReference type="PaxDb" id="3702-AT1G68620.1"/>
<dbReference type="ProteomicsDB" id="220327"/>
<dbReference type="EnsemblPlants" id="AT1G68620.1">
    <property type="protein sequence ID" value="AT1G68620.1"/>
    <property type="gene ID" value="AT1G68620"/>
</dbReference>
<dbReference type="GeneID" id="843192"/>
<dbReference type="Gramene" id="AT1G68620.1">
    <property type="protein sequence ID" value="AT1G68620.1"/>
    <property type="gene ID" value="AT1G68620"/>
</dbReference>
<dbReference type="KEGG" id="ath:AT1G68620"/>
<dbReference type="Araport" id="AT1G68620"/>
<dbReference type="TAIR" id="AT1G68620"/>
<dbReference type="eggNOG" id="KOG1515">
    <property type="taxonomic scope" value="Eukaryota"/>
</dbReference>
<dbReference type="HOGENOM" id="CLU_012494_22_0_1"/>
<dbReference type="InParanoid" id="Q9SX25"/>
<dbReference type="OMA" id="TNTWARF"/>
<dbReference type="PhylomeDB" id="Q9SX25"/>
<dbReference type="BioCyc" id="ARA:AT1G68620-MONOMER"/>
<dbReference type="PRO" id="PR:Q9SX25"/>
<dbReference type="Proteomes" id="UP000006548">
    <property type="component" value="Chromosome 1"/>
</dbReference>
<dbReference type="ExpressionAtlas" id="Q9SX25">
    <property type="expression patterns" value="baseline and differential"/>
</dbReference>
<dbReference type="GO" id="GO:0106435">
    <property type="term" value="F:carboxylesterase activity"/>
    <property type="evidence" value="ECO:0007669"/>
    <property type="project" value="UniProtKB-EC"/>
</dbReference>
<dbReference type="GO" id="GO:0071456">
    <property type="term" value="P:cellular response to hypoxia"/>
    <property type="evidence" value="ECO:0007007"/>
    <property type="project" value="TAIR"/>
</dbReference>
<dbReference type="Gene3D" id="3.40.50.1820">
    <property type="entry name" value="alpha/beta hydrolase"/>
    <property type="match status" value="1"/>
</dbReference>
<dbReference type="InterPro" id="IPR013094">
    <property type="entry name" value="AB_hydrolase_3"/>
</dbReference>
<dbReference type="InterPro" id="IPR029058">
    <property type="entry name" value="AB_hydrolase_fold"/>
</dbReference>
<dbReference type="InterPro" id="IPR050466">
    <property type="entry name" value="Carboxylest/Gibb_receptor"/>
</dbReference>
<dbReference type="InterPro" id="IPR033140">
    <property type="entry name" value="Lipase_GDXG_put_SER_AS"/>
</dbReference>
<dbReference type="PANTHER" id="PTHR23024">
    <property type="entry name" value="ARYLACETAMIDE DEACETYLASE"/>
    <property type="match status" value="1"/>
</dbReference>
<dbReference type="PANTHER" id="PTHR23024:SF409">
    <property type="entry name" value="CARBOXYLESTERASE 6-RELATED"/>
    <property type="match status" value="1"/>
</dbReference>
<dbReference type="Pfam" id="PF07859">
    <property type="entry name" value="Abhydrolase_3"/>
    <property type="match status" value="1"/>
</dbReference>
<dbReference type="SUPFAM" id="SSF53474">
    <property type="entry name" value="alpha/beta-Hydrolases"/>
    <property type="match status" value="1"/>
</dbReference>
<dbReference type="PROSITE" id="PS01174">
    <property type="entry name" value="LIPASE_GDXG_SER"/>
    <property type="match status" value="1"/>
</dbReference>